<comment type="function">
    <text evidence="1">Envelope protein required for virus entry into host cell and for cell-cell fusion (syncytium formation).</text>
</comment>
<comment type="subcellular location">
    <subcellularLocation>
        <location evidence="3">Virion membrane</location>
        <topology evidence="3">Single-pass type II membrane protein</topology>
    </subcellularLocation>
    <text evidence="1">Component of the intracellular mature virion (IMV) membrane.</text>
</comment>
<comment type="PTM">
    <text evidence="1">Contains two intramolecular disulfide bonds. They are created by the viral disulfide bond formation pathway, a poxvirus-specific pathway that operates on the cytoplasmic side of the MV membranes (By similarity).</text>
</comment>
<comment type="similarity">
    <text evidence="3">Belongs to the poxviridae A28 protein family.</text>
</comment>
<accession>Q98300</accession>
<dbReference type="EMBL" id="U60315">
    <property type="protein sequence ID" value="AAC55262.1"/>
    <property type="molecule type" value="Genomic_DNA"/>
</dbReference>
<dbReference type="PIR" id="T30736">
    <property type="entry name" value="T30736"/>
</dbReference>
<dbReference type="RefSeq" id="NP_044085.1">
    <property type="nucleotide sequence ID" value="NC_001731.1"/>
</dbReference>
<dbReference type="SMR" id="Q98300"/>
<dbReference type="GeneID" id="1487153"/>
<dbReference type="KEGG" id="vg:1487153"/>
<dbReference type="OrthoDB" id="17447at10239"/>
<dbReference type="Proteomes" id="UP000000869">
    <property type="component" value="Genome"/>
</dbReference>
<dbReference type="GO" id="GO:0016020">
    <property type="term" value="C:membrane"/>
    <property type="evidence" value="ECO:0007669"/>
    <property type="project" value="UniProtKB-KW"/>
</dbReference>
<dbReference type="GO" id="GO:0019031">
    <property type="term" value="C:viral envelope"/>
    <property type="evidence" value="ECO:0007669"/>
    <property type="project" value="UniProtKB-KW"/>
</dbReference>
<dbReference type="GO" id="GO:0055036">
    <property type="term" value="C:virion membrane"/>
    <property type="evidence" value="ECO:0007669"/>
    <property type="project" value="UniProtKB-SubCell"/>
</dbReference>
<dbReference type="GO" id="GO:0039663">
    <property type="term" value="P:membrane fusion involved in viral entry into host cell"/>
    <property type="evidence" value="ECO:0007669"/>
    <property type="project" value="UniProtKB-KW"/>
</dbReference>
<dbReference type="GO" id="GO:0046718">
    <property type="term" value="P:symbiont entry into host cell"/>
    <property type="evidence" value="ECO:0007669"/>
    <property type="project" value="UniProtKB-KW"/>
</dbReference>
<dbReference type="InterPro" id="IPR007664">
    <property type="entry name" value="Poxvirus_A28"/>
</dbReference>
<dbReference type="Pfam" id="PF04584">
    <property type="entry name" value="Pox_A28"/>
    <property type="match status" value="1"/>
</dbReference>
<keyword id="KW-1015">Disulfide bond</keyword>
<keyword id="KW-1168">Fusion of virus membrane with host membrane</keyword>
<keyword id="KW-0426">Late protein</keyword>
<keyword id="KW-0472">Membrane</keyword>
<keyword id="KW-1185">Reference proteome</keyword>
<keyword id="KW-0735">Signal-anchor</keyword>
<keyword id="KW-0812">Transmembrane</keyword>
<keyword id="KW-1133">Transmembrane helix</keyword>
<keyword id="KW-0261">Viral envelope protein</keyword>
<keyword id="KW-1162">Viral penetration into host cytoplasm</keyword>
<keyword id="KW-0946">Virion</keyword>
<keyword id="KW-1160">Virus entry into host cell</keyword>
<name>A28_MCV1</name>
<reference key="1">
    <citation type="journal article" date="1996" name="Science">
        <title>Genome sequence of a human tumorigenic poxvirus: prediction of specific host response-evasion genes.</title>
        <authorList>
            <person name="Senkevich T.G."/>
            <person name="Bugert J.J."/>
            <person name="Sisler J.R."/>
            <person name="Koonin E.V."/>
            <person name="Darai G."/>
            <person name="Moss B."/>
        </authorList>
    </citation>
    <scope>NUCLEOTIDE SEQUENCE [LARGE SCALE GENOMIC DNA]</scope>
</reference>
<sequence length="141" mass="15354">MDPLSVFFLVVAAAAVCTLLLQAYAVYENFDSILEFNDAHASLEYSKSLGGSYIDKHVFDPNDGVADVTQKWRCALYGKVYVSASAFGFYAQPDGSKRTFSTRDDCVDFTFGTADTSRVVNPCTDPNGAQAEDCAFLKSVL</sequence>
<proteinExistence type="inferred from homology"/>
<organism>
    <name type="scientific">Molluscum contagiosum virus subtype 1</name>
    <name type="common">MOCV</name>
    <name type="synonym">MCVI</name>
    <dbReference type="NCBI Taxonomy" id="10280"/>
    <lineage>
        <taxon>Viruses</taxon>
        <taxon>Varidnaviria</taxon>
        <taxon>Bamfordvirae</taxon>
        <taxon>Nucleocytoviricota</taxon>
        <taxon>Pokkesviricetes</taxon>
        <taxon>Chitovirales</taxon>
        <taxon>Poxviridae</taxon>
        <taxon>Chordopoxvirinae</taxon>
        <taxon>Molluscipoxvirus</taxon>
        <taxon>Molluscum contagiosum virus</taxon>
    </lineage>
</organism>
<evidence type="ECO:0000250" key="1"/>
<evidence type="ECO:0000255" key="2"/>
<evidence type="ECO:0000305" key="3"/>
<protein>
    <recommendedName>
        <fullName>Envelope protein A28 homolog</fullName>
    </recommendedName>
    <alternativeName>
        <fullName>Protein MC134</fullName>
    </alternativeName>
</protein>
<feature type="chain" id="PRO_0000099293" description="Envelope protein A28 homolog">
    <location>
        <begin position="1"/>
        <end position="141"/>
    </location>
</feature>
<feature type="transmembrane region" description="Helical; Signal-anchor for type II membrane protein" evidence="2">
    <location>
        <begin position="1"/>
        <end position="21"/>
    </location>
</feature>
<feature type="topological domain" description="Virion surface" evidence="2">
    <location>
        <begin position="22"/>
        <end position="140"/>
    </location>
</feature>
<gene>
    <name type="ordered locus">MC134L</name>
</gene>
<organismHost>
    <name type="scientific">Homo sapiens</name>
    <name type="common">Human</name>
    <dbReference type="NCBI Taxonomy" id="9606"/>
</organismHost>